<evidence type="ECO:0000250" key="1"/>
<evidence type="ECO:0000255" key="2">
    <source>
        <dbReference type="HAMAP-Rule" id="MF_00138"/>
    </source>
</evidence>
<dbReference type="EC" id="6.3.4.13" evidence="2"/>
<dbReference type="EMBL" id="BA000022">
    <property type="protein sequence ID" value="BAA18326.1"/>
    <property type="molecule type" value="Genomic_DNA"/>
</dbReference>
<dbReference type="PIR" id="S75867">
    <property type="entry name" value="S75867"/>
</dbReference>
<dbReference type="SMR" id="P74232"/>
<dbReference type="FunCoup" id="P74232">
    <property type="interactions" value="414"/>
</dbReference>
<dbReference type="STRING" id="1148.gene:10499202"/>
<dbReference type="PaxDb" id="1148-1653412"/>
<dbReference type="EnsemblBacteria" id="BAA18326">
    <property type="protein sequence ID" value="BAA18326"/>
    <property type="gene ID" value="BAA18326"/>
</dbReference>
<dbReference type="KEGG" id="syn:slr1159"/>
<dbReference type="eggNOG" id="COG0151">
    <property type="taxonomic scope" value="Bacteria"/>
</dbReference>
<dbReference type="InParanoid" id="P74232"/>
<dbReference type="PhylomeDB" id="P74232"/>
<dbReference type="UniPathway" id="UPA00074">
    <property type="reaction ID" value="UER00125"/>
</dbReference>
<dbReference type="Proteomes" id="UP000001425">
    <property type="component" value="Chromosome"/>
</dbReference>
<dbReference type="GO" id="GO:0005524">
    <property type="term" value="F:ATP binding"/>
    <property type="evidence" value="ECO:0007669"/>
    <property type="project" value="UniProtKB-KW"/>
</dbReference>
<dbReference type="GO" id="GO:0046872">
    <property type="term" value="F:metal ion binding"/>
    <property type="evidence" value="ECO:0007669"/>
    <property type="project" value="UniProtKB-KW"/>
</dbReference>
<dbReference type="GO" id="GO:0004637">
    <property type="term" value="F:phosphoribosylamine-glycine ligase activity"/>
    <property type="evidence" value="ECO:0007669"/>
    <property type="project" value="UniProtKB-UniRule"/>
</dbReference>
<dbReference type="GO" id="GO:0006189">
    <property type="term" value="P:'de novo' IMP biosynthetic process"/>
    <property type="evidence" value="ECO:0007669"/>
    <property type="project" value="UniProtKB-UniRule"/>
</dbReference>
<dbReference type="GO" id="GO:0009113">
    <property type="term" value="P:purine nucleobase biosynthetic process"/>
    <property type="evidence" value="ECO:0007669"/>
    <property type="project" value="InterPro"/>
</dbReference>
<dbReference type="FunFam" id="3.40.50.20:FF:000006">
    <property type="entry name" value="Phosphoribosylamine--glycine ligase, chloroplastic"/>
    <property type="match status" value="1"/>
</dbReference>
<dbReference type="FunFam" id="3.30.470.20:FF:000018">
    <property type="entry name" value="Trifunctional purine biosynthetic protein adenosine-3"/>
    <property type="match status" value="1"/>
</dbReference>
<dbReference type="FunFam" id="3.90.600.10:FF:000001">
    <property type="entry name" value="Trifunctional purine biosynthetic protein adenosine-3"/>
    <property type="match status" value="1"/>
</dbReference>
<dbReference type="Gene3D" id="3.40.50.20">
    <property type="match status" value="1"/>
</dbReference>
<dbReference type="Gene3D" id="3.30.1490.20">
    <property type="entry name" value="ATP-grasp fold, A domain"/>
    <property type="match status" value="1"/>
</dbReference>
<dbReference type="Gene3D" id="3.30.470.20">
    <property type="entry name" value="ATP-grasp fold, B domain"/>
    <property type="match status" value="1"/>
</dbReference>
<dbReference type="Gene3D" id="3.90.600.10">
    <property type="entry name" value="Phosphoribosylglycinamide synthetase, C-terminal domain"/>
    <property type="match status" value="1"/>
</dbReference>
<dbReference type="HAMAP" id="MF_00138">
    <property type="entry name" value="GARS"/>
    <property type="match status" value="1"/>
</dbReference>
<dbReference type="InterPro" id="IPR011761">
    <property type="entry name" value="ATP-grasp"/>
</dbReference>
<dbReference type="InterPro" id="IPR013815">
    <property type="entry name" value="ATP_grasp_subdomain_1"/>
</dbReference>
<dbReference type="InterPro" id="IPR016185">
    <property type="entry name" value="PreATP-grasp_dom_sf"/>
</dbReference>
<dbReference type="InterPro" id="IPR020561">
    <property type="entry name" value="PRibGlycinamid_synth_ATP-grasp"/>
</dbReference>
<dbReference type="InterPro" id="IPR000115">
    <property type="entry name" value="PRibGlycinamide_synth"/>
</dbReference>
<dbReference type="InterPro" id="IPR020560">
    <property type="entry name" value="PRibGlycinamide_synth_C-dom"/>
</dbReference>
<dbReference type="InterPro" id="IPR037123">
    <property type="entry name" value="PRibGlycinamide_synth_C_sf"/>
</dbReference>
<dbReference type="InterPro" id="IPR020559">
    <property type="entry name" value="PRibGlycinamide_synth_CS"/>
</dbReference>
<dbReference type="InterPro" id="IPR020562">
    <property type="entry name" value="PRibGlycinamide_synth_N"/>
</dbReference>
<dbReference type="InterPro" id="IPR011054">
    <property type="entry name" value="Rudment_hybrid_motif"/>
</dbReference>
<dbReference type="NCBIfam" id="TIGR00877">
    <property type="entry name" value="purD"/>
    <property type="match status" value="1"/>
</dbReference>
<dbReference type="PANTHER" id="PTHR43472">
    <property type="entry name" value="PHOSPHORIBOSYLAMINE--GLYCINE LIGASE"/>
    <property type="match status" value="1"/>
</dbReference>
<dbReference type="PANTHER" id="PTHR43472:SF1">
    <property type="entry name" value="PHOSPHORIBOSYLAMINE--GLYCINE LIGASE, CHLOROPLASTIC"/>
    <property type="match status" value="1"/>
</dbReference>
<dbReference type="Pfam" id="PF01071">
    <property type="entry name" value="GARS_A"/>
    <property type="match status" value="1"/>
</dbReference>
<dbReference type="Pfam" id="PF02843">
    <property type="entry name" value="GARS_C"/>
    <property type="match status" value="1"/>
</dbReference>
<dbReference type="Pfam" id="PF02844">
    <property type="entry name" value="GARS_N"/>
    <property type="match status" value="1"/>
</dbReference>
<dbReference type="SMART" id="SM01209">
    <property type="entry name" value="GARS_A"/>
    <property type="match status" value="1"/>
</dbReference>
<dbReference type="SMART" id="SM01210">
    <property type="entry name" value="GARS_C"/>
    <property type="match status" value="1"/>
</dbReference>
<dbReference type="SUPFAM" id="SSF56059">
    <property type="entry name" value="Glutathione synthetase ATP-binding domain-like"/>
    <property type="match status" value="1"/>
</dbReference>
<dbReference type="SUPFAM" id="SSF52440">
    <property type="entry name" value="PreATP-grasp domain"/>
    <property type="match status" value="1"/>
</dbReference>
<dbReference type="SUPFAM" id="SSF51246">
    <property type="entry name" value="Rudiment single hybrid motif"/>
    <property type="match status" value="1"/>
</dbReference>
<dbReference type="PROSITE" id="PS50975">
    <property type="entry name" value="ATP_GRASP"/>
    <property type="match status" value="1"/>
</dbReference>
<dbReference type="PROSITE" id="PS00184">
    <property type="entry name" value="GARS"/>
    <property type="match status" value="1"/>
</dbReference>
<name>PUR2_SYNY3</name>
<proteinExistence type="inferred from homology"/>
<organism>
    <name type="scientific">Synechocystis sp. (strain ATCC 27184 / PCC 6803 / Kazusa)</name>
    <dbReference type="NCBI Taxonomy" id="1111708"/>
    <lineage>
        <taxon>Bacteria</taxon>
        <taxon>Bacillati</taxon>
        <taxon>Cyanobacteriota</taxon>
        <taxon>Cyanophyceae</taxon>
        <taxon>Synechococcales</taxon>
        <taxon>Merismopediaceae</taxon>
        <taxon>Synechocystis</taxon>
    </lineage>
</organism>
<comment type="catalytic activity">
    <reaction evidence="2">
        <text>5-phospho-beta-D-ribosylamine + glycine + ATP = N(1)-(5-phospho-beta-D-ribosyl)glycinamide + ADP + phosphate + H(+)</text>
        <dbReference type="Rhea" id="RHEA:17453"/>
        <dbReference type="ChEBI" id="CHEBI:15378"/>
        <dbReference type="ChEBI" id="CHEBI:30616"/>
        <dbReference type="ChEBI" id="CHEBI:43474"/>
        <dbReference type="ChEBI" id="CHEBI:57305"/>
        <dbReference type="ChEBI" id="CHEBI:58681"/>
        <dbReference type="ChEBI" id="CHEBI:143788"/>
        <dbReference type="ChEBI" id="CHEBI:456216"/>
        <dbReference type="EC" id="6.3.4.13"/>
    </reaction>
</comment>
<comment type="cofactor">
    <cofactor evidence="1">
        <name>Mg(2+)</name>
        <dbReference type="ChEBI" id="CHEBI:18420"/>
    </cofactor>
    <cofactor evidence="1">
        <name>Mn(2+)</name>
        <dbReference type="ChEBI" id="CHEBI:29035"/>
    </cofactor>
    <text evidence="1">Binds 1 Mg(2+) or Mn(2+) ion per subunit.</text>
</comment>
<comment type="pathway">
    <text evidence="2">Purine metabolism; IMP biosynthesis via de novo pathway; N(1)-(5-phospho-D-ribosyl)glycinamide from 5-phospho-alpha-D-ribose 1-diphosphate: step 2/2.</text>
</comment>
<comment type="similarity">
    <text evidence="2">Belongs to the GARS family.</text>
</comment>
<reference key="1">
    <citation type="journal article" date="1996" name="DNA Res.">
        <title>Sequence analysis of the genome of the unicellular cyanobacterium Synechocystis sp. strain PCC6803. II. Sequence determination of the entire genome and assignment of potential protein-coding regions.</title>
        <authorList>
            <person name="Kaneko T."/>
            <person name="Sato S."/>
            <person name="Kotani H."/>
            <person name="Tanaka A."/>
            <person name="Asamizu E."/>
            <person name="Nakamura Y."/>
            <person name="Miyajima N."/>
            <person name="Hirosawa M."/>
            <person name="Sugiura M."/>
            <person name="Sasamoto S."/>
            <person name="Kimura T."/>
            <person name="Hosouchi T."/>
            <person name="Matsuno A."/>
            <person name="Muraki A."/>
            <person name="Nakazaki N."/>
            <person name="Naruo K."/>
            <person name="Okumura S."/>
            <person name="Shimpo S."/>
            <person name="Takeuchi C."/>
            <person name="Wada T."/>
            <person name="Watanabe A."/>
            <person name="Yamada M."/>
            <person name="Yasuda M."/>
            <person name="Tabata S."/>
        </authorList>
    </citation>
    <scope>NUCLEOTIDE SEQUENCE [LARGE SCALE GENOMIC DNA]</scope>
    <source>
        <strain>ATCC 27184 / PCC 6803 / Kazusa</strain>
    </source>
</reference>
<protein>
    <recommendedName>
        <fullName evidence="2">Phosphoribosylamine--glycine ligase</fullName>
        <ecNumber evidence="2">6.3.4.13</ecNumber>
    </recommendedName>
    <alternativeName>
        <fullName evidence="2">GARS</fullName>
    </alternativeName>
    <alternativeName>
        <fullName evidence="2">Glycinamide ribonucleotide synthetase</fullName>
    </alternativeName>
    <alternativeName>
        <fullName evidence="2">Phosphoribosylglycinamide synthetase</fullName>
    </alternativeName>
</protein>
<keyword id="KW-0067">ATP-binding</keyword>
<keyword id="KW-0436">Ligase</keyword>
<keyword id="KW-0460">Magnesium</keyword>
<keyword id="KW-0464">Manganese</keyword>
<keyword id="KW-0479">Metal-binding</keyword>
<keyword id="KW-0547">Nucleotide-binding</keyword>
<keyword id="KW-0658">Purine biosynthesis</keyword>
<keyword id="KW-1185">Reference proteome</keyword>
<feature type="chain" id="PRO_0000151494" description="Phosphoribosylamine--glycine ligase">
    <location>
        <begin position="1"/>
        <end position="419"/>
    </location>
</feature>
<feature type="domain" description="ATP-grasp" evidence="2">
    <location>
        <begin position="109"/>
        <end position="311"/>
    </location>
</feature>
<feature type="binding site" evidence="2">
    <location>
        <begin position="135"/>
        <end position="191"/>
    </location>
    <ligand>
        <name>ATP</name>
        <dbReference type="ChEBI" id="CHEBI:30616"/>
    </ligand>
</feature>
<feature type="binding site" evidence="2">
    <location>
        <position position="281"/>
    </location>
    <ligand>
        <name>Mg(2+)</name>
        <dbReference type="ChEBI" id="CHEBI:18420"/>
    </ligand>
</feature>
<feature type="binding site" evidence="2">
    <location>
        <position position="283"/>
    </location>
    <ligand>
        <name>Mg(2+)</name>
        <dbReference type="ChEBI" id="CHEBI:18420"/>
    </ligand>
</feature>
<sequence>MKVAVIGSGGREHTLAWSLVRSPEVSHCYCLPGNGGTAGLPKTENVAIAVDQLGEICEFCQTEKINLVVVGPELPLTLGLTDQLQALGIKVFGPTKAGAELEASKSWTKQLLIEAGVPTAFGETFTEPAPAQAYATKMGAPIVVKADGLAAGKGVIVAQTSAEATTAIAELFDQGFEKIVVEEFLPGEEVSVLALCDGKTVIPLLPAQDHKRIGEGDQGLNTGGMGAYCPAPIAPPAVIDQVQKQILQPTANALAKRGIDYRGVLYAGLMVSPTGEIKVLEYNCRFGDPETQAVLPLLATPLEKVLMACVEQNLEQLGPLQWHSGNAVCVVVAAGGYPGSYRKGDEINGLAEAEAQDVKVFHAGTELKEGKVLTNGGRVLGVTALGKDLSTAIATAYRGVEQIDFDGMYYRRDIGHKAL</sequence>
<gene>
    <name evidence="2" type="primary">purD</name>
    <name type="ordered locus">slr1159</name>
</gene>
<accession>P74232</accession>